<keyword id="KW-0067">ATP-binding</keyword>
<keyword id="KW-0217">Developmental protein</keyword>
<keyword id="KW-0341">Growth regulation</keyword>
<keyword id="KW-1184">Jasmonic acid signaling pathway</keyword>
<keyword id="KW-0436">Ligase</keyword>
<keyword id="KW-0547">Nucleotide-binding</keyword>
<keyword id="KW-0611">Plant defense</keyword>
<keyword id="KW-1185">Reference proteome</keyword>
<keyword id="KW-0346">Stress response</keyword>
<name>GH35_ORYSJ</name>
<feature type="chain" id="PRO_0000203582" description="Jasmonoyl--L-amino acid synthetase GH3.5">
    <location>
        <begin position="1"/>
        <end position="581"/>
    </location>
</feature>
<feature type="binding site" evidence="2">
    <location>
        <position position="92"/>
    </location>
    <ligand>
        <name>ATP</name>
        <dbReference type="ChEBI" id="CHEBI:30616"/>
    </ligand>
</feature>
<feature type="binding site" evidence="2">
    <location>
        <position position="95"/>
    </location>
    <ligand>
        <name>jasmonate</name>
        <dbReference type="ChEBI" id="CHEBI:58431"/>
    </ligand>
</feature>
<feature type="binding site" evidence="2">
    <location>
        <position position="115"/>
    </location>
    <ligand>
        <name>ATP</name>
        <dbReference type="ChEBI" id="CHEBI:30616"/>
    </ligand>
</feature>
<feature type="binding site" evidence="2">
    <location>
        <begin position="159"/>
        <end position="163"/>
    </location>
    <ligand>
        <name>an L-alpha-amino acid</name>
        <dbReference type="ChEBI" id="CHEBI:59869"/>
    </ligand>
</feature>
<feature type="binding site" evidence="2">
    <location>
        <position position="161"/>
    </location>
    <ligand>
        <name>ATP</name>
        <dbReference type="ChEBI" id="CHEBI:30616"/>
    </ligand>
</feature>
<feature type="binding site" evidence="2">
    <location>
        <begin position="321"/>
        <end position="324"/>
    </location>
    <ligand>
        <name>jasmonate</name>
        <dbReference type="ChEBI" id="CHEBI:58431"/>
    </ligand>
</feature>
<feature type="binding site" evidence="2">
    <location>
        <begin position="324"/>
        <end position="329"/>
    </location>
    <ligand>
        <name>ATP</name>
        <dbReference type="ChEBI" id="CHEBI:30616"/>
    </ligand>
</feature>
<feature type="binding site" evidence="2">
    <location>
        <position position="326"/>
    </location>
    <ligand>
        <name>jasmonate</name>
        <dbReference type="ChEBI" id="CHEBI:58431"/>
    </ligand>
</feature>
<feature type="binding site" evidence="2">
    <location>
        <begin position="534"/>
        <end position="538"/>
    </location>
    <ligand>
        <name>an L-alpha-amino acid</name>
        <dbReference type="ChEBI" id="CHEBI:59869"/>
    </ligand>
</feature>
<feature type="binding site" evidence="2">
    <location>
        <position position="561"/>
    </location>
    <ligand>
        <name>ATP</name>
        <dbReference type="ChEBI" id="CHEBI:30616"/>
    </ligand>
</feature>
<organism>
    <name type="scientific">Oryza sativa subsp. japonica</name>
    <name type="common">Rice</name>
    <dbReference type="NCBI Taxonomy" id="39947"/>
    <lineage>
        <taxon>Eukaryota</taxon>
        <taxon>Viridiplantae</taxon>
        <taxon>Streptophyta</taxon>
        <taxon>Embryophyta</taxon>
        <taxon>Tracheophyta</taxon>
        <taxon>Spermatophyta</taxon>
        <taxon>Magnoliopsida</taxon>
        <taxon>Liliopsida</taxon>
        <taxon>Poales</taxon>
        <taxon>Poaceae</taxon>
        <taxon>BOP clade</taxon>
        <taxon>Oryzoideae</taxon>
        <taxon>Oryzeae</taxon>
        <taxon>Oryzinae</taxon>
        <taxon>Oryza</taxon>
        <taxon>Oryza sativa</taxon>
    </lineage>
</organism>
<comment type="function">
    <text evidence="1 4 5 6 7 8 9">Catalyzes the synthesis of jasmonate-amino acid conjugates by adenylation. Catalyzes the conjugation of jasmonate (JA) to Ile when expressed in a heterologous system (E.coli) (PubMed:21619871). Catalyzes in vitro the conjugation of jasmonate (JA) to Ile, Phe, Cys, Leu, Met, Ala, Val and Trp (PubMed:24033451). Involved in the production of JA-Ile in response to infection by the rice blast fungus Magnaporthe oryzae (PubMed:21619871, PubMed:23832371). Required for the accumulation of the flavonoid phytoalexin sakuranetin in response to infection by the rice blast fungus (PubMed:23832371). Involved in herbivory-induced JA-Ile accumulation (PubMed:23621526). Involved in the production of JA-Ile in response to wounding (PubMed:21619871, PubMed:23621526, PubMed:24033451). Required for modulation of light and JA signaling in photomorphogenesis (PubMed:18266905). Required for normal seed development (PubMed:18266905, PubMed:23621526). Required for optimal flower opening and closing and anther dehiscence (PubMed:24947835). May catalyze the synthesis of indole-3-acetic acid (IAA)-amino acid conjugates, providing a mechanism for the plant to cope with the presence of excess auxin (By similarity).</text>
</comment>
<comment type="catalytic activity">
    <reaction evidence="8">
        <text>a jasmonate + an L-alpha-amino acid + ATP = a jasmonyl-L-amino acid + AMP + diphosphate + H(+)</text>
        <dbReference type="Rhea" id="RHEA:55772"/>
        <dbReference type="ChEBI" id="CHEBI:15378"/>
        <dbReference type="ChEBI" id="CHEBI:30616"/>
        <dbReference type="ChEBI" id="CHEBI:33019"/>
        <dbReference type="ChEBI" id="CHEBI:59869"/>
        <dbReference type="ChEBI" id="CHEBI:136183"/>
        <dbReference type="ChEBI" id="CHEBI:136184"/>
        <dbReference type="ChEBI" id="CHEBI:456215"/>
        <dbReference type="EC" id="6.3.2.52"/>
    </reaction>
</comment>
<comment type="tissue specificity">
    <text evidence="3">Expressed in green shoots, roots and flowers.</text>
</comment>
<comment type="induction">
    <text evidence="3 4 5 6">At low level by auxin. Induced by methyl jasmonate (MeJA), red light, far-red light and blue light (PubMed:18266905). Induced by wounding and infection by the rice blast fungus Magnaporthe oryzae (PubMed:21619871). Induced by elicitors from oral secretions of armyworm caterpillars (Spodoptera mauritia) (PubMed:23621526).</text>
</comment>
<comment type="disruption phenotype">
    <text evidence="4 6 7 9">Open-husk phenotype after pollination and malformed seeds with low fertility (PubMed:18266905, PubMed:23621526, PubMed:24947835). Increased susceptibility to infection by the rice blast fungus Magnaporthe oryzae (PubMed:23832371).</text>
</comment>
<comment type="similarity">
    <text evidence="12">Belongs to the IAA-amido conjugating enzyme family.</text>
</comment>
<dbReference type="EC" id="6.3.2.52" evidence="8"/>
<dbReference type="EMBL" id="AC137608">
    <property type="protein sequence ID" value="AAT47070.1"/>
    <property type="molecule type" value="Genomic_DNA"/>
</dbReference>
<dbReference type="EMBL" id="AP008211">
    <property type="protein sequence ID" value="BAF18374.1"/>
    <property type="molecule type" value="Genomic_DNA"/>
</dbReference>
<dbReference type="EMBL" id="AP014961">
    <property type="protein sequence ID" value="BAS95574.1"/>
    <property type="molecule type" value="Genomic_DNA"/>
</dbReference>
<dbReference type="EMBL" id="CM000142">
    <property type="protein sequence ID" value="EEE64857.1"/>
    <property type="molecule type" value="Genomic_DNA"/>
</dbReference>
<dbReference type="EMBL" id="AK071721">
    <property type="protein sequence ID" value="BAG92652.1"/>
    <property type="molecule type" value="mRNA"/>
</dbReference>
<dbReference type="RefSeq" id="XP_015639715.1">
    <property type="nucleotide sequence ID" value="XM_015784229.1"/>
</dbReference>
<dbReference type="SMR" id="Q6I581"/>
<dbReference type="FunCoup" id="Q6I581">
    <property type="interactions" value="487"/>
</dbReference>
<dbReference type="STRING" id="39947.Q6I581"/>
<dbReference type="PaxDb" id="39947-Q6I581"/>
<dbReference type="EnsemblPlants" id="Os05t0586200-01">
    <property type="protein sequence ID" value="Os05t0586200-01"/>
    <property type="gene ID" value="Os05g0586200"/>
</dbReference>
<dbReference type="Gramene" id="Os05t0586200-01">
    <property type="protein sequence ID" value="Os05t0586200-01"/>
    <property type="gene ID" value="Os05g0586200"/>
</dbReference>
<dbReference type="KEGG" id="dosa:Os05g0586200"/>
<dbReference type="eggNOG" id="ENOG502QTQD">
    <property type="taxonomic scope" value="Eukaryota"/>
</dbReference>
<dbReference type="HOGENOM" id="CLU_016249_2_1_1"/>
<dbReference type="InParanoid" id="Q6I581"/>
<dbReference type="OMA" id="WNDELFD"/>
<dbReference type="OrthoDB" id="10004661at2759"/>
<dbReference type="PlantReactome" id="R-OSA-6787011">
    <property type="pathway name" value="Jasmonic acid signaling"/>
</dbReference>
<dbReference type="Proteomes" id="UP000000763">
    <property type="component" value="Chromosome 5"/>
</dbReference>
<dbReference type="Proteomes" id="UP000007752">
    <property type="component" value="Chromosome 5"/>
</dbReference>
<dbReference type="Proteomes" id="UP000059680">
    <property type="component" value="Chromosome 5"/>
</dbReference>
<dbReference type="GO" id="GO:0005737">
    <property type="term" value="C:cytoplasm"/>
    <property type="evidence" value="ECO:0000318"/>
    <property type="project" value="GO_Central"/>
</dbReference>
<dbReference type="GO" id="GO:0016881">
    <property type="term" value="F:acid-amino acid ligase activity"/>
    <property type="evidence" value="ECO:0000318"/>
    <property type="project" value="GO_Central"/>
</dbReference>
<dbReference type="GO" id="GO:0005524">
    <property type="term" value="F:ATP binding"/>
    <property type="evidence" value="ECO:0007669"/>
    <property type="project" value="UniProtKB-KW"/>
</dbReference>
<dbReference type="GO" id="GO:0080123">
    <property type="term" value="F:jasmonoyl-L-amino acid ligase activity"/>
    <property type="evidence" value="ECO:0000314"/>
    <property type="project" value="UniProtKB"/>
</dbReference>
<dbReference type="GO" id="GO:0006952">
    <property type="term" value="P:defense response"/>
    <property type="evidence" value="ECO:0007669"/>
    <property type="project" value="UniProtKB-KW"/>
</dbReference>
<dbReference type="GO" id="GO:0009733">
    <property type="term" value="P:response to auxin"/>
    <property type="evidence" value="ECO:0000305"/>
    <property type="project" value="Gramene"/>
</dbReference>
<dbReference type="GO" id="GO:0009416">
    <property type="term" value="P:response to light stimulus"/>
    <property type="evidence" value="ECO:0000305"/>
    <property type="project" value="Gramene"/>
</dbReference>
<dbReference type="InterPro" id="IPR004993">
    <property type="entry name" value="GH3"/>
</dbReference>
<dbReference type="InterPro" id="IPR055378">
    <property type="entry name" value="GH3_C"/>
</dbReference>
<dbReference type="InterPro" id="IPR055377">
    <property type="entry name" value="GH3_M"/>
</dbReference>
<dbReference type="PANTHER" id="PTHR31901">
    <property type="entry name" value="GH3 DOMAIN-CONTAINING PROTEIN"/>
    <property type="match status" value="1"/>
</dbReference>
<dbReference type="PANTHER" id="PTHR31901:SF5">
    <property type="entry name" value="JASMONOYL--L-AMINO ACID SYNTHETASE JAR1"/>
    <property type="match status" value="1"/>
</dbReference>
<dbReference type="Pfam" id="PF03321">
    <property type="entry name" value="GH3"/>
    <property type="match status" value="1"/>
</dbReference>
<dbReference type="Pfam" id="PF23572">
    <property type="entry name" value="GH3_C"/>
    <property type="match status" value="1"/>
</dbReference>
<dbReference type="Pfam" id="PF23571">
    <property type="entry name" value="GH3_M"/>
    <property type="match status" value="1"/>
</dbReference>
<sequence length="581" mass="65095">MTICSCEETINEFEMLTRDAARVQKDTLKKILEINASAEYLQNFGLGGRTDAESYKSCIPLCVHNDIEPYIQRIVDGDTSPVVTGEPITNLSLSSGTTHGKPKFIPFNDELLETTLQIYRTSYAFRNREYPIGQGKALQFVYGSKQVITKGGILATTATTNLYRRQRYKEGMKDIQSQCCSPDEVIFGPDFHQSLYCHLLCGLIYSEEVHSVFSTFAHSLVHAFQTFEEVWEDLCTDIRDGVLSKKVTAPSIREAVSKILKPNPELADSIYKKCIGLSNWYGVIPALWPNAKYVYGIMTGSMEPYLKKLRHYAGNLPLISADYGASEGWVGSNIDPTVPPEQVTYAVLPQVGYFEFIPLEKPIGEETENSASIHYIESDPVGLTEVEVGKIYEVVITNFAGLYRYRLGDVVKIARFHNSTPELQFICRRSLVLSINIDKNTEKDLQLAVEEASKFLEGEKLEVMDFTSFVERSSDPGRYVIFWELSGDASDEVLSSCANALDLAFIDAGYTGSRKIKTIGPLELRILRKGTFKEILDHFLSLGGAVSQFKTPRFVNPSNSKVLQILSRNVTQSYFSTAYGF</sequence>
<protein>
    <recommendedName>
        <fullName evidence="12">Jasmonoyl--L-amino acid synthetase GH3.5</fullName>
        <ecNumber evidence="8">6.3.2.52</ecNumber>
    </recommendedName>
    <alternativeName>
        <fullName evidence="10">Auxin-responsive GH3-like protein 5</fullName>
        <shortName evidence="10">OsGH3-5</shortName>
    </alternativeName>
    <alternativeName>
        <fullName evidence="12">Indole-3-acetic acid-amido synthetase GH3.5</fullName>
    </alternativeName>
    <alternativeName>
        <fullName evidence="12">Jasmonate-amino acid synthetase JAR1</fullName>
    </alternativeName>
    <alternativeName>
        <fullName evidence="12">Jasmonic acid-amido synthetase JAR1</fullName>
    </alternativeName>
    <alternativeName>
        <fullName evidence="11">Protein JASMONATE RESISTANT 1</fullName>
        <shortName evidence="11">OsJAR1</shortName>
    </alternativeName>
</protein>
<accession>Q6I581</accession>
<accession>A0A0P0WRM7</accession>
<accession>Q0DFJ9</accession>
<reference key="1">
    <citation type="journal article" date="2005" name="Mol. Genet. Genomics">
        <title>A fine physical map of the rice chromosome 5.</title>
        <authorList>
            <person name="Cheng C.-H."/>
            <person name="Chung M.C."/>
            <person name="Liu S.-M."/>
            <person name="Chen S.-K."/>
            <person name="Kao F.Y."/>
            <person name="Lin S.-J."/>
            <person name="Hsiao S.-H."/>
            <person name="Tseng I.C."/>
            <person name="Hsing Y.-I.C."/>
            <person name="Wu H.-P."/>
            <person name="Chen C.-S."/>
            <person name="Shaw J.-F."/>
            <person name="Wu J."/>
            <person name="Matsumoto T."/>
            <person name="Sasaki T."/>
            <person name="Chen H.-C."/>
            <person name="Chow T.-Y."/>
        </authorList>
    </citation>
    <scope>NUCLEOTIDE SEQUENCE [LARGE SCALE GENOMIC DNA]</scope>
    <source>
        <strain>cv. Nipponbare</strain>
    </source>
</reference>
<reference key="2">
    <citation type="journal article" date="2005" name="Nature">
        <title>The map-based sequence of the rice genome.</title>
        <authorList>
            <consortium name="International rice genome sequencing project (IRGSP)"/>
        </authorList>
    </citation>
    <scope>NUCLEOTIDE SEQUENCE [LARGE SCALE GENOMIC DNA]</scope>
    <source>
        <strain>cv. Nipponbare</strain>
    </source>
</reference>
<reference key="3">
    <citation type="journal article" date="2008" name="Nucleic Acids Res.">
        <title>The rice annotation project database (RAP-DB): 2008 update.</title>
        <authorList>
            <consortium name="The rice annotation project (RAP)"/>
        </authorList>
    </citation>
    <scope>GENOME REANNOTATION</scope>
    <source>
        <strain>cv. Nipponbare</strain>
    </source>
</reference>
<reference key="4">
    <citation type="journal article" date="2013" name="Rice">
        <title>Improvement of the Oryza sativa Nipponbare reference genome using next generation sequence and optical map data.</title>
        <authorList>
            <person name="Kawahara Y."/>
            <person name="de la Bastide M."/>
            <person name="Hamilton J.P."/>
            <person name="Kanamori H."/>
            <person name="McCombie W.R."/>
            <person name="Ouyang S."/>
            <person name="Schwartz D.C."/>
            <person name="Tanaka T."/>
            <person name="Wu J."/>
            <person name="Zhou S."/>
            <person name="Childs K.L."/>
            <person name="Davidson R.M."/>
            <person name="Lin H."/>
            <person name="Quesada-Ocampo L."/>
            <person name="Vaillancourt B."/>
            <person name="Sakai H."/>
            <person name="Lee S.S."/>
            <person name="Kim J."/>
            <person name="Numa H."/>
            <person name="Itoh T."/>
            <person name="Buell C.R."/>
            <person name="Matsumoto T."/>
        </authorList>
    </citation>
    <scope>GENOME REANNOTATION</scope>
    <source>
        <strain>cv. Nipponbare</strain>
    </source>
</reference>
<reference key="5">
    <citation type="journal article" date="2005" name="PLoS Biol.">
        <title>The genomes of Oryza sativa: a history of duplications.</title>
        <authorList>
            <person name="Yu J."/>
            <person name="Wang J."/>
            <person name="Lin W."/>
            <person name="Li S."/>
            <person name="Li H."/>
            <person name="Zhou J."/>
            <person name="Ni P."/>
            <person name="Dong W."/>
            <person name="Hu S."/>
            <person name="Zeng C."/>
            <person name="Zhang J."/>
            <person name="Zhang Y."/>
            <person name="Li R."/>
            <person name="Xu Z."/>
            <person name="Li S."/>
            <person name="Li X."/>
            <person name="Zheng H."/>
            <person name="Cong L."/>
            <person name="Lin L."/>
            <person name="Yin J."/>
            <person name="Geng J."/>
            <person name="Li G."/>
            <person name="Shi J."/>
            <person name="Liu J."/>
            <person name="Lv H."/>
            <person name="Li J."/>
            <person name="Wang J."/>
            <person name="Deng Y."/>
            <person name="Ran L."/>
            <person name="Shi X."/>
            <person name="Wang X."/>
            <person name="Wu Q."/>
            <person name="Li C."/>
            <person name="Ren X."/>
            <person name="Wang J."/>
            <person name="Wang X."/>
            <person name="Li D."/>
            <person name="Liu D."/>
            <person name="Zhang X."/>
            <person name="Ji Z."/>
            <person name="Zhao W."/>
            <person name="Sun Y."/>
            <person name="Zhang Z."/>
            <person name="Bao J."/>
            <person name="Han Y."/>
            <person name="Dong L."/>
            <person name="Ji J."/>
            <person name="Chen P."/>
            <person name="Wu S."/>
            <person name="Liu J."/>
            <person name="Xiao Y."/>
            <person name="Bu D."/>
            <person name="Tan J."/>
            <person name="Yang L."/>
            <person name="Ye C."/>
            <person name="Zhang J."/>
            <person name="Xu J."/>
            <person name="Zhou Y."/>
            <person name="Yu Y."/>
            <person name="Zhang B."/>
            <person name="Zhuang S."/>
            <person name="Wei H."/>
            <person name="Liu B."/>
            <person name="Lei M."/>
            <person name="Yu H."/>
            <person name="Li Y."/>
            <person name="Xu H."/>
            <person name="Wei S."/>
            <person name="He X."/>
            <person name="Fang L."/>
            <person name="Zhang Z."/>
            <person name="Zhang Y."/>
            <person name="Huang X."/>
            <person name="Su Z."/>
            <person name="Tong W."/>
            <person name="Li J."/>
            <person name="Tong Z."/>
            <person name="Li S."/>
            <person name="Ye J."/>
            <person name="Wang L."/>
            <person name="Fang L."/>
            <person name="Lei T."/>
            <person name="Chen C.-S."/>
            <person name="Chen H.-C."/>
            <person name="Xu Z."/>
            <person name="Li H."/>
            <person name="Huang H."/>
            <person name="Zhang F."/>
            <person name="Xu H."/>
            <person name="Li N."/>
            <person name="Zhao C."/>
            <person name="Li S."/>
            <person name="Dong L."/>
            <person name="Huang Y."/>
            <person name="Li L."/>
            <person name="Xi Y."/>
            <person name="Qi Q."/>
            <person name="Li W."/>
            <person name="Zhang B."/>
            <person name="Hu W."/>
            <person name="Zhang Y."/>
            <person name="Tian X."/>
            <person name="Jiao Y."/>
            <person name="Liang X."/>
            <person name="Jin J."/>
            <person name="Gao L."/>
            <person name="Zheng W."/>
            <person name="Hao B."/>
            <person name="Liu S.-M."/>
            <person name="Wang W."/>
            <person name="Yuan L."/>
            <person name="Cao M."/>
            <person name="McDermott J."/>
            <person name="Samudrala R."/>
            <person name="Wang J."/>
            <person name="Wong G.K.-S."/>
            <person name="Yang H."/>
        </authorList>
    </citation>
    <scope>NUCLEOTIDE SEQUENCE [LARGE SCALE GENOMIC DNA]</scope>
    <source>
        <strain>cv. Nipponbare</strain>
    </source>
</reference>
<reference key="6">
    <citation type="journal article" date="2003" name="Science">
        <title>Collection, mapping, and annotation of over 28,000 cDNA clones from japonica rice.</title>
        <authorList>
            <consortium name="The rice full-length cDNA consortium"/>
        </authorList>
    </citation>
    <scope>NUCLEOTIDE SEQUENCE [LARGE SCALE MRNA]</scope>
    <source>
        <strain>cv. Nipponbare</strain>
    </source>
</reference>
<reference key="7">
    <citation type="journal article" date="2006" name="Funct. Integr. Genomics">
        <title>The auxin-responsive GH3 gene family in rice (Oryza sativa).</title>
        <authorList>
            <person name="Jain M."/>
            <person name="Kaur N."/>
            <person name="Tyagi A.K."/>
            <person name="Khurana J.P."/>
        </authorList>
    </citation>
    <scope>TISSUE SPECIFICITY</scope>
    <scope>INDUCTION</scope>
    <scope>NOMENCLATURE</scope>
</reference>
<reference key="8">
    <citation type="journal article" date="2008" name="Plant Cell Environ.">
        <title>Rice JASMONATE RESISTANT 1 is involved in phytochrome and jasmonate signalling.</title>
        <authorList>
            <person name="Riemann M."/>
            <person name="Riemann M."/>
            <person name="Takano M."/>
        </authorList>
    </citation>
    <scope>FUNCTION</scope>
    <scope>INDUCTION</scope>
    <scope>DISRUPTION PHENOTYPE</scope>
</reference>
<reference key="9">
    <citation type="journal article" date="2011" name="Biochem. Biophys. Res. Commun.">
        <title>OsJAR1 and OsJAR2 are jasmonyl-L-isoleucine synthases involved in wound- and pathogen-induced jasmonic acid signalling.</title>
        <authorList>
            <person name="Wakuta S."/>
            <person name="Suzuki E."/>
            <person name="Saburi W."/>
            <person name="Matsuura H."/>
            <person name="Nabeta K."/>
            <person name="Imai R."/>
            <person name="Matsui H."/>
        </authorList>
    </citation>
    <scope>FUNCTION</scope>
    <scope>INDUCTION</scope>
</reference>
<reference key="10">
    <citation type="journal article" date="2013" name="Biosci. Biotechnol. Biochem.">
        <title>OsJAR1 contributes mainly to biosynthesis of the stress-induced jasmonoyl-isoleucine involved in defense responses in rice.</title>
        <authorList>
            <person name="Shimizu T."/>
            <person name="Miyamoto K."/>
            <person name="Miyamoto K."/>
            <person name="Minami E."/>
            <person name="Nishizawa Y."/>
            <person name="Iino M."/>
            <person name="Nojiri H."/>
            <person name="Yamane H."/>
            <person name="Okada K."/>
        </authorList>
    </citation>
    <scope>FUNCTION</scope>
    <scope>DISRUPTION PHENOTYPE</scope>
</reference>
<reference key="11">
    <citation type="journal article" date="2013" name="J. Integr. Plant Biol.">
        <title>Response of rice to insect elicitors and the role of OsJAR1 in wound and herbivory-induced JA-Ile accumulation.</title>
        <authorList>
            <person name="Fukumoto K."/>
            <person name="Alamgir K."/>
            <person name="Yamashita Y."/>
            <person name="Mori I.C."/>
            <person name="Matsuura H."/>
            <person name="Galis I."/>
        </authorList>
    </citation>
    <scope>FUNCTION</scope>
    <scope>INDUCTION</scope>
    <scope>DISRUPTION PHENOTYPE</scope>
</reference>
<reference key="12">
    <citation type="journal article" date="2014" name="Plant Cell Environ.">
        <title>Light induces jasmonate-isoleucine conjugation via OsJAR1-dependent and -independent pathways in rice.</title>
        <authorList>
            <person name="Svyatyna K."/>
            <person name="Jikumaru Y."/>
            <person name="Brendel R."/>
            <person name="Reichelt M."/>
            <person name="Mithoefer A."/>
            <person name="Takano M."/>
            <person name="Kamiya Y."/>
            <person name="Nick P."/>
            <person name="Riemann M."/>
        </authorList>
    </citation>
    <scope>FUNCTION</scope>
    <scope>CATALYTIC ACTIVITY</scope>
</reference>
<reference key="13">
    <citation type="journal article" date="2014" name="Plant Mol. Biol.">
        <title>OsJAR1 is required for JA-regulated floret opening and anther dehiscence in rice.</title>
        <authorList>
            <person name="Xiao Y."/>
            <person name="Chen Y."/>
            <person name="Charnikhova T."/>
            <person name="Mulder P.P."/>
            <person name="Heijmans J."/>
            <person name="Hoogenboom A."/>
            <person name="Agalou A."/>
            <person name="Michel C."/>
            <person name="Morel J.B."/>
            <person name="Dreni L."/>
            <person name="Kater M.M."/>
            <person name="Bouwmeester H."/>
            <person name="Wang M."/>
            <person name="Zhu Z."/>
            <person name="Ouwerkerk P.B."/>
        </authorList>
    </citation>
    <scope>FUNCTION</scope>
    <scope>DISRUPTION PHENOTYPE</scope>
</reference>
<gene>
    <name evidence="10" type="primary">GH3.5</name>
    <name evidence="11" type="synonym">JAR1</name>
    <name evidence="14" type="ordered locus">Os05g0586200</name>
    <name evidence="12" type="ordered locus">LOC_Os05g50890</name>
    <name evidence="15" type="ORF">OsJ_19714</name>
    <name evidence="13" type="ORF">OSJNBa0009C07.16</name>
</gene>
<evidence type="ECO:0000250" key="1">
    <source>
        <dbReference type="UniProtKB" id="O82333"/>
    </source>
</evidence>
<evidence type="ECO:0000250" key="2">
    <source>
        <dbReference type="UniProtKB" id="Q9SKE2"/>
    </source>
</evidence>
<evidence type="ECO:0000269" key="3">
    <source>
    </source>
</evidence>
<evidence type="ECO:0000269" key="4">
    <source>
    </source>
</evidence>
<evidence type="ECO:0000269" key="5">
    <source>
    </source>
</evidence>
<evidence type="ECO:0000269" key="6">
    <source>
    </source>
</evidence>
<evidence type="ECO:0000269" key="7">
    <source>
    </source>
</evidence>
<evidence type="ECO:0000269" key="8">
    <source>
    </source>
</evidence>
<evidence type="ECO:0000269" key="9">
    <source>
    </source>
</evidence>
<evidence type="ECO:0000303" key="10">
    <source>
    </source>
</evidence>
<evidence type="ECO:0000303" key="11">
    <source>
    </source>
</evidence>
<evidence type="ECO:0000305" key="12"/>
<evidence type="ECO:0000312" key="13">
    <source>
        <dbReference type="EMBL" id="AAT47070.1"/>
    </source>
</evidence>
<evidence type="ECO:0000312" key="14">
    <source>
        <dbReference type="EMBL" id="BAF18374.1"/>
    </source>
</evidence>
<evidence type="ECO:0000312" key="15">
    <source>
        <dbReference type="EMBL" id="EEE64857.1"/>
    </source>
</evidence>
<proteinExistence type="evidence at protein level"/>